<protein>
    <recommendedName>
        <fullName evidence="1">Enoyl-[acyl-carrier-protein] reductase [NADH]</fullName>
        <shortName evidence="1">ENR</shortName>
        <ecNumber evidence="1">1.3.1.9</ecNumber>
    </recommendedName>
</protein>
<reference key="1">
    <citation type="submission" date="2009-05" db="EMBL/GenBank/DDBJ databases">
        <title>Complete sequence of Tolumonas auensis DSM 9187.</title>
        <authorList>
            <consortium name="US DOE Joint Genome Institute"/>
            <person name="Lucas S."/>
            <person name="Copeland A."/>
            <person name="Lapidus A."/>
            <person name="Glavina del Rio T."/>
            <person name="Tice H."/>
            <person name="Bruce D."/>
            <person name="Goodwin L."/>
            <person name="Pitluck S."/>
            <person name="Chertkov O."/>
            <person name="Brettin T."/>
            <person name="Detter J.C."/>
            <person name="Han C."/>
            <person name="Larimer F."/>
            <person name="Land M."/>
            <person name="Hauser L."/>
            <person name="Kyrpides N."/>
            <person name="Mikhailova N."/>
            <person name="Spring S."/>
            <person name="Beller H."/>
        </authorList>
    </citation>
    <scope>NUCLEOTIDE SEQUENCE [LARGE SCALE GENOMIC DNA]</scope>
    <source>
        <strain>DSM 9187 / NBRC 110442 / TA 4</strain>
    </source>
</reference>
<comment type="function">
    <text evidence="1">Involved in the final reduction of the elongation cycle of fatty acid synthesis (FAS II). Catalyzes the reduction of a carbon-carbon double bond in an enoyl moiety that is covalently linked to an acyl carrier protein (ACP).</text>
</comment>
<comment type="catalytic activity">
    <reaction evidence="1">
        <text>a 2,3-saturated acyl-[ACP] + NAD(+) = a (2E)-enoyl-[ACP] + NADH + H(+)</text>
        <dbReference type="Rhea" id="RHEA:10240"/>
        <dbReference type="Rhea" id="RHEA-COMP:9925"/>
        <dbReference type="Rhea" id="RHEA-COMP:9926"/>
        <dbReference type="ChEBI" id="CHEBI:15378"/>
        <dbReference type="ChEBI" id="CHEBI:57540"/>
        <dbReference type="ChEBI" id="CHEBI:57945"/>
        <dbReference type="ChEBI" id="CHEBI:78784"/>
        <dbReference type="ChEBI" id="CHEBI:78785"/>
        <dbReference type="EC" id="1.3.1.9"/>
    </reaction>
</comment>
<comment type="pathway">
    <text evidence="1">Lipid metabolism; fatty acid biosynthesis.</text>
</comment>
<comment type="subunit">
    <text evidence="1">Monomer.</text>
</comment>
<comment type="similarity">
    <text evidence="1">Belongs to the TER reductase family.</text>
</comment>
<accession>C4LB77</accession>
<feature type="chain" id="PRO_1000216089" description="Enoyl-[acyl-carrier-protein] reductase [NADH]">
    <location>
        <begin position="1"/>
        <end position="397"/>
    </location>
</feature>
<feature type="active site" description="Proton donor" evidence="1">
    <location>
        <position position="235"/>
    </location>
</feature>
<feature type="binding site" evidence="1">
    <location>
        <begin position="48"/>
        <end position="53"/>
    </location>
    <ligand>
        <name>NAD(+)</name>
        <dbReference type="ChEBI" id="CHEBI:57540"/>
    </ligand>
</feature>
<feature type="binding site" evidence="1">
    <location>
        <begin position="74"/>
        <end position="75"/>
    </location>
    <ligand>
        <name>NAD(+)</name>
        <dbReference type="ChEBI" id="CHEBI:57540"/>
    </ligand>
</feature>
<feature type="binding site" evidence="1">
    <location>
        <begin position="111"/>
        <end position="112"/>
    </location>
    <ligand>
        <name>NAD(+)</name>
        <dbReference type="ChEBI" id="CHEBI:57540"/>
    </ligand>
</feature>
<feature type="binding site" evidence="1">
    <location>
        <begin position="139"/>
        <end position="140"/>
    </location>
    <ligand>
        <name>NAD(+)</name>
        <dbReference type="ChEBI" id="CHEBI:57540"/>
    </ligand>
</feature>
<feature type="binding site" evidence="1">
    <location>
        <position position="225"/>
    </location>
    <ligand>
        <name>substrate</name>
    </ligand>
</feature>
<feature type="binding site" evidence="1">
    <location>
        <position position="244"/>
    </location>
    <ligand>
        <name>NAD(+)</name>
        <dbReference type="ChEBI" id="CHEBI:57540"/>
    </ligand>
</feature>
<feature type="binding site" evidence="1">
    <location>
        <begin position="273"/>
        <end position="275"/>
    </location>
    <ligand>
        <name>NAD(+)</name>
        <dbReference type="ChEBI" id="CHEBI:57540"/>
    </ligand>
</feature>
<feature type="site" description="Plays an important role in discriminating NADH against NADPH" evidence="1">
    <location>
        <position position="75"/>
    </location>
</feature>
<organism>
    <name type="scientific">Tolumonas auensis (strain DSM 9187 / NBRC 110442 / TA 4)</name>
    <dbReference type="NCBI Taxonomy" id="595494"/>
    <lineage>
        <taxon>Bacteria</taxon>
        <taxon>Pseudomonadati</taxon>
        <taxon>Pseudomonadota</taxon>
        <taxon>Gammaproteobacteria</taxon>
        <taxon>Aeromonadales</taxon>
        <taxon>Aeromonadaceae</taxon>
        <taxon>Tolumonas</taxon>
    </lineage>
</organism>
<proteinExistence type="inferred from homology"/>
<keyword id="KW-0275">Fatty acid biosynthesis</keyword>
<keyword id="KW-0276">Fatty acid metabolism</keyword>
<keyword id="KW-0444">Lipid biosynthesis</keyword>
<keyword id="KW-0443">Lipid metabolism</keyword>
<keyword id="KW-0520">NAD</keyword>
<keyword id="KW-0560">Oxidoreductase</keyword>
<keyword id="KW-1185">Reference proteome</keyword>
<evidence type="ECO:0000255" key="1">
    <source>
        <dbReference type="HAMAP-Rule" id="MF_01838"/>
    </source>
</evidence>
<gene>
    <name evidence="1" type="primary">fabV</name>
    <name type="ordered locus">Tola_2687</name>
</gene>
<sequence>MIIAPKVRGFICTTTHPAGCEANVRQQIAYVKSKGPLANGPKRVLVIGASTGYGLASRITAAFGSDAATIGVFLEKAGTEKKPGSAGWYNSAAFDKAAKEAGLYSKSVNGDAFSDECRAKVVELIKADLGQVDMVVYSLASPVRKLPATGELIRSALKPIGEVYTATAVDTNKDELIEAHVEPANEEEIANTIKVMGGEDWELWLQALDQAGVLAEGVKTVAYSYIGTDITWPIYWHGTLGRAKEDLDRASSAIRQQLSSKNGTANVAVLKSVVTQASAAIPVMPLYIAMSFKLMKEQGIHEGCIEQIQRMFYTRLFDGEFVTDDAQRIRMDDWELRESVQQACRDLWPQVTTENLSQLTDYQGYKAEFLKLFGFGWEGVDYTADVNPEVNFDVVAM</sequence>
<dbReference type="EC" id="1.3.1.9" evidence="1"/>
<dbReference type="EMBL" id="CP001616">
    <property type="protein sequence ID" value="ACQ94280.1"/>
    <property type="molecule type" value="Genomic_DNA"/>
</dbReference>
<dbReference type="RefSeq" id="WP_015879729.1">
    <property type="nucleotide sequence ID" value="NC_012691.1"/>
</dbReference>
<dbReference type="SMR" id="C4LB77"/>
<dbReference type="STRING" id="595494.Tola_2687"/>
<dbReference type="KEGG" id="tau:Tola_2687"/>
<dbReference type="eggNOG" id="COG3007">
    <property type="taxonomic scope" value="Bacteria"/>
</dbReference>
<dbReference type="HOGENOM" id="CLU_057698_1_0_6"/>
<dbReference type="OrthoDB" id="9802260at2"/>
<dbReference type="UniPathway" id="UPA00094"/>
<dbReference type="Proteomes" id="UP000009073">
    <property type="component" value="Chromosome"/>
</dbReference>
<dbReference type="GO" id="GO:0004318">
    <property type="term" value="F:enoyl-[acyl-carrier-protein] reductase (NADH) activity"/>
    <property type="evidence" value="ECO:0007669"/>
    <property type="project" value="UniProtKB-UniRule"/>
</dbReference>
<dbReference type="GO" id="GO:0051287">
    <property type="term" value="F:NAD binding"/>
    <property type="evidence" value="ECO:0007669"/>
    <property type="project" value="UniProtKB-UniRule"/>
</dbReference>
<dbReference type="GO" id="GO:0050343">
    <property type="term" value="F:trans-2-enoyl-CoA reductase (NADH) activity"/>
    <property type="evidence" value="ECO:0007669"/>
    <property type="project" value="TreeGrafter"/>
</dbReference>
<dbReference type="GO" id="GO:0006633">
    <property type="term" value="P:fatty acid biosynthetic process"/>
    <property type="evidence" value="ECO:0007669"/>
    <property type="project" value="UniProtKB-UniRule"/>
</dbReference>
<dbReference type="FunFam" id="3.40.50.720:FF:000221">
    <property type="entry name" value="Enoyl-[acyl-carrier-protein] reductase [NADH]"/>
    <property type="match status" value="1"/>
</dbReference>
<dbReference type="Gene3D" id="3.40.50.720">
    <property type="entry name" value="NAD(P)-binding Rossmann-like Domain"/>
    <property type="match status" value="1"/>
</dbReference>
<dbReference type="HAMAP" id="MF_01838">
    <property type="entry name" value="FabV_reductase"/>
    <property type="match status" value="1"/>
</dbReference>
<dbReference type="InterPro" id="IPR024906">
    <property type="entry name" value="Eno_Rdtase_FAD-bd_dom"/>
</dbReference>
<dbReference type="InterPro" id="IPR024910">
    <property type="entry name" value="Enoyl-CoA_Rdtase_cat_dom"/>
</dbReference>
<dbReference type="InterPro" id="IPR050048">
    <property type="entry name" value="FabV-like_NADH_b"/>
</dbReference>
<dbReference type="InterPro" id="IPR010758">
    <property type="entry name" value="Trans-2-enoyl-CoA_reductase"/>
</dbReference>
<dbReference type="NCBIfam" id="NF043048">
    <property type="entry name" value="EnoyACPredFabV"/>
    <property type="match status" value="1"/>
</dbReference>
<dbReference type="NCBIfam" id="NF010177">
    <property type="entry name" value="PRK13656.1"/>
    <property type="match status" value="1"/>
</dbReference>
<dbReference type="PANTHER" id="PTHR37480">
    <property type="entry name" value="ENOYL-[ACYL-CARRIER-PROTEIN] REDUCTASE [NADH]"/>
    <property type="match status" value="1"/>
</dbReference>
<dbReference type="PANTHER" id="PTHR37480:SF1">
    <property type="entry name" value="ENOYL-[ACYL-CARRIER-PROTEIN] REDUCTASE [NADH]"/>
    <property type="match status" value="1"/>
</dbReference>
<dbReference type="Pfam" id="PF07055">
    <property type="entry name" value="Eno-Rase_FAD_bd"/>
    <property type="match status" value="1"/>
</dbReference>
<dbReference type="Pfam" id="PF12242">
    <property type="entry name" value="Eno-Rase_NADH_b"/>
    <property type="match status" value="1"/>
</dbReference>
<dbReference type="Pfam" id="PF12241">
    <property type="entry name" value="Enoyl_reductase"/>
    <property type="match status" value="1"/>
</dbReference>
<name>FABV_TOLAT</name>